<name>FCRL1_MOUSE</name>
<accession>Q8R4Y0</accession>
<accession>Q68SP0</accession>
<accession>Q7TMH2</accession>
<accession>Q80WN3</accession>
<accession>Q8BYS4</accession>
<protein>
    <recommendedName>
        <fullName>Fc receptor-like protein 1</fullName>
        <shortName>FcR-like protein 1</shortName>
        <shortName>FcRL1</shortName>
    </recommendedName>
    <alternativeName>
        <fullName>BXMAS1-like protein 1</fullName>
        <shortName>mBXMH1</shortName>
    </alternativeName>
    <alternativeName>
        <fullName>Fc receptor homolog 1</fullName>
        <shortName>FcRH1</shortName>
        <shortName>moFcRH1</shortName>
    </alternativeName>
    <alternativeName>
        <fullName>IFGP family protein 1</fullName>
        <shortName>mIFGP1</shortName>
    </alternativeName>
    <cdAntigenName>CD307a</cdAntigenName>
</protein>
<reference key="1">
    <citation type="journal article" date="2002" name="Immunogenetics">
        <title>A family of highly diverse human and mouse genes structurally links leukocyte FcR, gp42 and PECAM-1.</title>
        <authorList>
            <person name="Guselnikov S.V."/>
            <person name="Ershova S.A."/>
            <person name="Mechetina L.V."/>
            <person name="Najakshin A.M."/>
            <person name="Volkova O.Y."/>
            <person name="Alabyev B.Y."/>
            <person name="Taranin A.V."/>
        </authorList>
    </citation>
    <scope>NUCLEOTIDE SEQUENCE [MRNA] (ISOFORM 1)</scope>
    <scope>TISSUE SPECIFICITY</scope>
    <source>
        <strain>C57BL/6J</strain>
        <tissue>Mammary gland</tissue>
    </source>
</reference>
<reference key="2">
    <citation type="journal article" date="2004" name="Int. Immunol.">
        <title>Differential B cell expression of mouse Fc receptor homologs.</title>
        <authorList>
            <person name="Davis R.S."/>
            <person name="Stephan R.P."/>
            <person name="Chen C.-C."/>
            <person name="Dennis G. Jr."/>
            <person name="Cooper M.D."/>
        </authorList>
    </citation>
    <scope>NUCLEOTIDE SEQUENCE [MRNA] (ISOFORMS 1 AND 2)</scope>
    <scope>TISSUE SPECIFICITY</scope>
    <source>
        <strain>BALB/cJ</strain>
        <tissue>Spleen</tissue>
    </source>
</reference>
<reference key="3">
    <citation type="submission" date="2002-10" db="EMBL/GenBank/DDBJ databases">
        <title>Molecular cloning of mouse BXMAS1 homologs; homologous to IgFc receptor.</title>
        <authorList>
            <person name="Nakayama Y."/>
            <person name="Maher S.E."/>
            <person name="Weissman S.M."/>
            <person name="Bothwell A.L.M."/>
        </authorList>
    </citation>
    <scope>NUCLEOTIDE SEQUENCE [MRNA] (ISOFORMS 1 AND 4)</scope>
    <source>
        <strain>C57BL/6J</strain>
    </source>
</reference>
<reference key="4">
    <citation type="journal article" date="2005" name="Science">
        <title>The transcriptional landscape of the mammalian genome.</title>
        <authorList>
            <person name="Carninci P."/>
            <person name="Kasukawa T."/>
            <person name="Katayama S."/>
            <person name="Gough J."/>
            <person name="Frith M.C."/>
            <person name="Maeda N."/>
            <person name="Oyama R."/>
            <person name="Ravasi T."/>
            <person name="Lenhard B."/>
            <person name="Wells C."/>
            <person name="Kodzius R."/>
            <person name="Shimokawa K."/>
            <person name="Bajic V.B."/>
            <person name="Brenner S.E."/>
            <person name="Batalov S."/>
            <person name="Forrest A.R."/>
            <person name="Zavolan M."/>
            <person name="Davis M.J."/>
            <person name="Wilming L.G."/>
            <person name="Aidinis V."/>
            <person name="Allen J.E."/>
            <person name="Ambesi-Impiombato A."/>
            <person name="Apweiler R."/>
            <person name="Aturaliya R.N."/>
            <person name="Bailey T.L."/>
            <person name="Bansal M."/>
            <person name="Baxter L."/>
            <person name="Beisel K.W."/>
            <person name="Bersano T."/>
            <person name="Bono H."/>
            <person name="Chalk A.M."/>
            <person name="Chiu K.P."/>
            <person name="Choudhary V."/>
            <person name="Christoffels A."/>
            <person name="Clutterbuck D.R."/>
            <person name="Crowe M.L."/>
            <person name="Dalla E."/>
            <person name="Dalrymple B.P."/>
            <person name="de Bono B."/>
            <person name="Della Gatta G."/>
            <person name="di Bernardo D."/>
            <person name="Down T."/>
            <person name="Engstrom P."/>
            <person name="Fagiolini M."/>
            <person name="Faulkner G."/>
            <person name="Fletcher C.F."/>
            <person name="Fukushima T."/>
            <person name="Furuno M."/>
            <person name="Futaki S."/>
            <person name="Gariboldi M."/>
            <person name="Georgii-Hemming P."/>
            <person name="Gingeras T.R."/>
            <person name="Gojobori T."/>
            <person name="Green R.E."/>
            <person name="Gustincich S."/>
            <person name="Harbers M."/>
            <person name="Hayashi Y."/>
            <person name="Hensch T.K."/>
            <person name="Hirokawa N."/>
            <person name="Hill D."/>
            <person name="Huminiecki L."/>
            <person name="Iacono M."/>
            <person name="Ikeo K."/>
            <person name="Iwama A."/>
            <person name="Ishikawa T."/>
            <person name="Jakt M."/>
            <person name="Kanapin A."/>
            <person name="Katoh M."/>
            <person name="Kawasawa Y."/>
            <person name="Kelso J."/>
            <person name="Kitamura H."/>
            <person name="Kitano H."/>
            <person name="Kollias G."/>
            <person name="Krishnan S.P."/>
            <person name="Kruger A."/>
            <person name="Kummerfeld S.K."/>
            <person name="Kurochkin I.V."/>
            <person name="Lareau L.F."/>
            <person name="Lazarevic D."/>
            <person name="Lipovich L."/>
            <person name="Liu J."/>
            <person name="Liuni S."/>
            <person name="McWilliam S."/>
            <person name="Madan Babu M."/>
            <person name="Madera M."/>
            <person name="Marchionni L."/>
            <person name="Matsuda H."/>
            <person name="Matsuzawa S."/>
            <person name="Miki H."/>
            <person name="Mignone F."/>
            <person name="Miyake S."/>
            <person name="Morris K."/>
            <person name="Mottagui-Tabar S."/>
            <person name="Mulder N."/>
            <person name="Nakano N."/>
            <person name="Nakauchi H."/>
            <person name="Ng P."/>
            <person name="Nilsson R."/>
            <person name="Nishiguchi S."/>
            <person name="Nishikawa S."/>
            <person name="Nori F."/>
            <person name="Ohara O."/>
            <person name="Okazaki Y."/>
            <person name="Orlando V."/>
            <person name="Pang K.C."/>
            <person name="Pavan W.J."/>
            <person name="Pavesi G."/>
            <person name="Pesole G."/>
            <person name="Petrovsky N."/>
            <person name="Piazza S."/>
            <person name="Reed J."/>
            <person name="Reid J.F."/>
            <person name="Ring B.Z."/>
            <person name="Ringwald M."/>
            <person name="Rost B."/>
            <person name="Ruan Y."/>
            <person name="Salzberg S.L."/>
            <person name="Sandelin A."/>
            <person name="Schneider C."/>
            <person name="Schoenbach C."/>
            <person name="Sekiguchi K."/>
            <person name="Semple C.A."/>
            <person name="Seno S."/>
            <person name="Sessa L."/>
            <person name="Sheng Y."/>
            <person name="Shibata Y."/>
            <person name="Shimada H."/>
            <person name="Shimada K."/>
            <person name="Silva D."/>
            <person name="Sinclair B."/>
            <person name="Sperling S."/>
            <person name="Stupka E."/>
            <person name="Sugiura K."/>
            <person name="Sultana R."/>
            <person name="Takenaka Y."/>
            <person name="Taki K."/>
            <person name="Tammoja K."/>
            <person name="Tan S.L."/>
            <person name="Tang S."/>
            <person name="Taylor M.S."/>
            <person name="Tegner J."/>
            <person name="Teichmann S.A."/>
            <person name="Ueda H.R."/>
            <person name="van Nimwegen E."/>
            <person name="Verardo R."/>
            <person name="Wei C.L."/>
            <person name="Yagi K."/>
            <person name="Yamanishi H."/>
            <person name="Zabarovsky E."/>
            <person name="Zhu S."/>
            <person name="Zimmer A."/>
            <person name="Hide W."/>
            <person name="Bult C."/>
            <person name="Grimmond S.M."/>
            <person name="Teasdale R.D."/>
            <person name="Liu E.T."/>
            <person name="Brusic V."/>
            <person name="Quackenbush J."/>
            <person name="Wahlestedt C."/>
            <person name="Mattick J.S."/>
            <person name="Hume D.A."/>
            <person name="Kai C."/>
            <person name="Sasaki D."/>
            <person name="Tomaru Y."/>
            <person name="Fukuda S."/>
            <person name="Kanamori-Katayama M."/>
            <person name="Suzuki M."/>
            <person name="Aoki J."/>
            <person name="Arakawa T."/>
            <person name="Iida J."/>
            <person name="Imamura K."/>
            <person name="Itoh M."/>
            <person name="Kato T."/>
            <person name="Kawaji H."/>
            <person name="Kawagashira N."/>
            <person name="Kawashima T."/>
            <person name="Kojima M."/>
            <person name="Kondo S."/>
            <person name="Konno H."/>
            <person name="Nakano K."/>
            <person name="Ninomiya N."/>
            <person name="Nishio T."/>
            <person name="Okada M."/>
            <person name="Plessy C."/>
            <person name="Shibata K."/>
            <person name="Shiraki T."/>
            <person name="Suzuki S."/>
            <person name="Tagami M."/>
            <person name="Waki K."/>
            <person name="Watahiki A."/>
            <person name="Okamura-Oho Y."/>
            <person name="Suzuki H."/>
            <person name="Kawai J."/>
            <person name="Hayashizaki Y."/>
        </authorList>
    </citation>
    <scope>NUCLEOTIDE SEQUENCE [LARGE SCALE MRNA] (ISOFORMS 1 AND 2)</scope>
    <source>
        <strain>C57BL/6J</strain>
        <tissue>Hypothalamus</tissue>
        <tissue>Spleen</tissue>
    </source>
</reference>
<reference key="5">
    <citation type="journal article" date="2004" name="Genome Res.">
        <title>The status, quality, and expansion of the NIH full-length cDNA project: the Mammalian Gene Collection (MGC).</title>
        <authorList>
            <consortium name="The MGC Project Team"/>
        </authorList>
    </citation>
    <scope>NUCLEOTIDE SEQUENCE [LARGE SCALE MRNA] (ISOFORM 3)</scope>
    <source>
        <strain>FVB/N</strain>
        <tissue>Mammary tumor</tissue>
    </source>
</reference>
<reference key="6">
    <citation type="journal article" date="2019" name="Sci. Adv.">
        <title>Fc receptor-like 1 intrinsically recruits c-Abl to enhance B cell activation and function.</title>
        <authorList>
            <person name="Zhao X."/>
            <person name="Xie H."/>
            <person name="Zhao M."/>
            <person name="Ahsan A."/>
            <person name="Li X."/>
            <person name="Wang F."/>
            <person name="Yi J."/>
            <person name="Yang Z."/>
            <person name="Wu C."/>
            <person name="Raman I."/>
            <person name="Li Q.Z."/>
            <person name="Kim T.J."/>
            <person name="Liu W."/>
        </authorList>
    </citation>
    <scope>FUNCTION</scope>
    <scope>MUTAGENESIS OF TYR-281</scope>
    <scope>DISRUPTION PHENOTYPE</scope>
    <scope>INTERACTION WITH ABL1</scope>
    <scope>PHOSPHORYLATION AT TYR-281</scope>
    <scope>SUBCELLULAR LOCATION</scope>
</reference>
<reference key="7">
    <citation type="journal article" date="2021" name="J. Immunol.">
        <title>FCRL1 Regulates B Cell Receptor-Induced ERK Activation through GRB2.</title>
        <authorList>
            <person name="DeLuca J.M."/>
            <person name="Murphy M.K."/>
            <person name="Wang X."/>
            <person name="Wilson T.J."/>
        </authorList>
    </citation>
    <scope>FUNCTION</scope>
    <scope>MUTAGENESIS OF TYR-281 AND TYR-297</scope>
    <scope>DISRUPTION PHENOTYPE</scope>
    <scope>INTERACTION WITH GRB2 AND SOS1</scope>
    <scope>PHOSPHORYLATION AT TYR-281 AND TYR-297</scope>
</reference>
<comment type="function">
    <text evidence="1">May function as an activating coreceptor in B-cells. May function in B-cells activation and differentiation (By similarity).</text>
</comment>
<comment type="subunit">
    <text evidence="7 8">Interacts with ABL1 (PubMed:31328160). Interacts with GRB2 and SOS1 (PubMed:34697226). Interacts with SHIP-1/INPP5D (PubMed:34697226).</text>
</comment>
<comment type="subcellular location">
    <subcellularLocation>
        <location evidence="7">Cell membrane</location>
        <topology evidence="1">Single-pass type I membrane protein</topology>
    </subcellularLocation>
</comment>
<comment type="alternative products">
    <event type="alternative splicing"/>
    <isoform>
        <id>Q8R4Y0-1</id>
        <name>1</name>
        <name>a</name>
        <name>long</name>
        <sequence type="displayed"/>
    </isoform>
    <isoform>
        <id>Q8R4Y0-2</id>
        <name>2</name>
        <name>short</name>
        <sequence type="described" ref="VSP_033296"/>
    </isoform>
    <isoform>
        <id>Q8R4Y0-3</id>
        <name>3</name>
        <sequence type="described" ref="VSP_033299"/>
    </isoform>
    <isoform>
        <id>Q8R4Y0-4</id>
        <name>4</name>
        <name>b</name>
        <sequence type="described" ref="VSP_033297 VSP_033298"/>
    </isoform>
</comment>
<comment type="tissue specificity">
    <text evidence="5 6">Widely expressed. Expressed in B-cells at the various stages of differentiation.</text>
</comment>
<comment type="PTM">
    <text evidence="7">Phosphorylated on C-terminal region upon BCR ligation leading to recruitment of ABL1 (PubMed:31328160).</text>
</comment>
<comment type="disruption phenotype">
    <text evidence="7">Fcrl1-deficiency impairs B-cell activation induced by antigen binding in the absence of ligation.</text>
</comment>
<sequence>MLPWLLLLICALPCEPAGISDVSLKTRPPGGWVMEGDKLVLICSVDRVTGNITYFWYRGALGFQLETKTQPSLTAEFEISDMKQSDADQYYCAANDGHDPIASELVSIHVRVPVSRPVLTFGDSGTQAVLGDLVELHCKALRGSPPIFYQFYHESIILGNSSAPSGGGASFNFSLTAEHSGNFSCEASNGQGAQRSEVVALNLTGLSLVPTENGISHLSLGLTGWLLGCLSPITMALIFCYWLKRKIGRQSEDPVRSPPQTVLQGSTYPKSPDSRQPEPLYENVNVVSGNEVYSLVYHTPQVLEPAAAQHVRTHGVSESFQVSSGLYSKPRINIAHMDYEDAM</sequence>
<evidence type="ECO:0000250" key="1"/>
<evidence type="ECO:0000255" key="2"/>
<evidence type="ECO:0000255" key="3">
    <source>
        <dbReference type="PROSITE-ProRule" id="PRU00114"/>
    </source>
</evidence>
<evidence type="ECO:0000256" key="4">
    <source>
        <dbReference type="SAM" id="MobiDB-lite"/>
    </source>
</evidence>
<evidence type="ECO:0000269" key="5">
    <source>
    </source>
</evidence>
<evidence type="ECO:0000269" key="6">
    <source>
    </source>
</evidence>
<evidence type="ECO:0000269" key="7">
    <source>
    </source>
</evidence>
<evidence type="ECO:0000269" key="8">
    <source>
    </source>
</evidence>
<evidence type="ECO:0000303" key="9">
    <source>
    </source>
</evidence>
<evidence type="ECO:0000303" key="10">
    <source>
    </source>
</evidence>
<evidence type="ECO:0000303" key="11">
    <source>
    </source>
</evidence>
<evidence type="ECO:0000303" key="12">
    <source ref="3"/>
</evidence>
<evidence type="ECO:0000305" key="13"/>
<proteinExistence type="evidence at protein level"/>
<feature type="signal peptide" evidence="2">
    <location>
        <begin position="1"/>
        <end position="16"/>
    </location>
</feature>
<feature type="chain" id="PRO_0000331639" description="Fc receptor-like protein 1">
    <location>
        <begin position="17"/>
        <end position="343"/>
    </location>
</feature>
<feature type="topological domain" description="Extracellular" evidence="2">
    <location>
        <begin position="17"/>
        <end position="219"/>
    </location>
</feature>
<feature type="transmembrane region" description="Helical" evidence="2">
    <location>
        <begin position="220"/>
        <end position="240"/>
    </location>
</feature>
<feature type="topological domain" description="Cytoplasmic" evidence="2">
    <location>
        <begin position="241"/>
        <end position="343"/>
    </location>
</feature>
<feature type="domain" description="Ig-like C2-type 1">
    <location>
        <begin position="17"/>
        <end position="109"/>
    </location>
</feature>
<feature type="domain" description="Ig-like C2-type 2">
    <location>
        <begin position="117"/>
        <end position="200"/>
    </location>
</feature>
<feature type="region of interest" description="Disordered" evidence="4">
    <location>
        <begin position="251"/>
        <end position="278"/>
    </location>
</feature>
<feature type="short sequence motif" description="ITIM motif 1">
    <location>
        <begin position="266"/>
        <end position="271"/>
    </location>
</feature>
<feature type="short sequence motif" description="ITIM motif 2">
    <location>
        <begin position="279"/>
        <end position="284"/>
    </location>
</feature>
<feature type="short sequence motif" description="ITIM motif 3">
    <location>
        <begin position="291"/>
        <end position="296"/>
    </location>
</feature>
<feature type="short sequence motif" description="ITIM motif 4">
    <location>
        <begin position="325"/>
        <end position="330"/>
    </location>
</feature>
<feature type="short sequence motif" description="ITIM motif 5">
    <location>
        <begin position="337"/>
        <end position="342"/>
    </location>
</feature>
<feature type="compositionally biased region" description="Polar residues" evidence="4">
    <location>
        <begin position="258"/>
        <end position="269"/>
    </location>
</feature>
<feature type="modified residue" description="Phosphotyrosine" evidence="7 8">
    <location>
        <position position="281"/>
    </location>
</feature>
<feature type="modified residue" description="Phosphotyrosine" evidence="8">
    <location>
        <position position="297"/>
    </location>
</feature>
<feature type="glycosylation site" description="N-linked (GlcNAc...) asparagine" evidence="2">
    <location>
        <position position="51"/>
    </location>
</feature>
<feature type="glycosylation site" description="N-linked (GlcNAc...) asparagine" evidence="2">
    <location>
        <position position="202"/>
    </location>
</feature>
<feature type="disulfide bond" evidence="3">
    <location>
        <begin position="138"/>
        <end position="185"/>
    </location>
</feature>
<feature type="splice variant" id="VSP_033296" description="In isoform 2." evidence="9 11">
    <location>
        <begin position="205"/>
        <end position="247"/>
    </location>
</feature>
<feature type="splice variant" id="VSP_033297" description="In isoform 4." evidence="12">
    <original>LSL</original>
    <variation>KPT</variation>
    <location>
        <begin position="206"/>
        <end position="208"/>
    </location>
</feature>
<feature type="splice variant" id="VSP_033298" description="In isoform 4." evidence="12">
    <location>
        <begin position="209"/>
        <end position="343"/>
    </location>
</feature>
<feature type="splice variant" id="VSP_033299" description="In isoform 3." evidence="10">
    <original>SFQVSSGLYSKPRINIAHMDYEDAM</original>
    <variation>VQGGIA</variation>
    <location>
        <begin position="319"/>
        <end position="343"/>
    </location>
</feature>
<feature type="mutagenesis site" description="Impaired BCR-mediated signaling and FCRL1-induced B-cell proliferation. Impaired phosphorylation." evidence="7 8">
    <original>Y</original>
    <variation>F</variation>
    <location>
        <position position="281"/>
    </location>
</feature>
<feature type="mutagenesis site" description="Impaired phosphorylation." evidence="8">
    <original>Y</original>
    <variation>F</variation>
    <location>
        <position position="297"/>
    </location>
</feature>
<feature type="sequence conflict" description="In Ref. 4; BAC30017." evidence="13" ref="4">
    <original>A</original>
    <variation>P</variation>
    <location>
        <position position="102"/>
    </location>
</feature>
<feature type="sequence conflict" description="In Ref. 4; BAC30017." evidence="13" ref="4">
    <original>P</original>
    <variation>L</variation>
    <location>
        <position position="232"/>
    </location>
</feature>
<feature type="sequence conflict" description="In Ref. 4; BAC30017." evidence="13" ref="4">
    <original>S</original>
    <variation>P</variation>
    <location>
        <position position="271"/>
    </location>
</feature>
<dbReference type="EMBL" id="AF329485">
    <property type="protein sequence ID" value="AAM11542.1"/>
    <property type="molecule type" value="mRNA"/>
</dbReference>
<dbReference type="EMBL" id="AY506554">
    <property type="protein sequence ID" value="AAS91574.1"/>
    <property type="molecule type" value="mRNA"/>
</dbReference>
<dbReference type="EMBL" id="AY506555">
    <property type="protein sequence ID" value="AAS91575.1"/>
    <property type="molecule type" value="mRNA"/>
</dbReference>
<dbReference type="EMBL" id="AY158088">
    <property type="protein sequence ID" value="AAO20871.1"/>
    <property type="molecule type" value="mRNA"/>
</dbReference>
<dbReference type="EMBL" id="AY158089">
    <property type="protein sequence ID" value="AAO20872.1"/>
    <property type="molecule type" value="mRNA"/>
</dbReference>
<dbReference type="EMBL" id="AK038494">
    <property type="protein sequence ID" value="BAC30017.1"/>
    <property type="molecule type" value="mRNA"/>
</dbReference>
<dbReference type="EMBL" id="AK156985">
    <property type="protein sequence ID" value="BAE33923.1"/>
    <property type="molecule type" value="mRNA"/>
</dbReference>
<dbReference type="EMBL" id="BC055830">
    <property type="protein sequence ID" value="AAH55830.1"/>
    <property type="molecule type" value="mRNA"/>
</dbReference>
<dbReference type="CCDS" id="CCDS17452.1">
    <molecule id="Q8R4Y0-1"/>
</dbReference>
<dbReference type="CCDS" id="CCDS50942.1">
    <molecule id="Q8R4Y0-2"/>
</dbReference>
<dbReference type="CCDS" id="CCDS79937.1">
    <molecule id="Q8R4Y0-3"/>
</dbReference>
<dbReference type="RefSeq" id="NP_001129708.1">
    <property type="nucleotide sequence ID" value="NM_001136236.1"/>
</dbReference>
<dbReference type="RefSeq" id="NP_001297474.1">
    <property type="nucleotide sequence ID" value="NM_001310545.1"/>
</dbReference>
<dbReference type="RefSeq" id="NP_694730.2">
    <property type="nucleotide sequence ID" value="NM_153090.2"/>
</dbReference>
<dbReference type="RefSeq" id="NP_835459.1">
    <property type="nucleotide sequence ID" value="NM_178165.4"/>
</dbReference>
<dbReference type="SMR" id="Q8R4Y0"/>
<dbReference type="FunCoup" id="Q8R4Y0">
    <property type="interactions" value="17"/>
</dbReference>
<dbReference type="STRING" id="10090.ENSMUSP00000130936"/>
<dbReference type="GlyCosmos" id="Q8R4Y0">
    <property type="glycosylation" value="2 sites, No reported glycans"/>
</dbReference>
<dbReference type="GlyGen" id="Q8R4Y0">
    <property type="glycosylation" value="2 sites, 1 N-linked glycan (1 site)"/>
</dbReference>
<dbReference type="iPTMnet" id="Q8R4Y0"/>
<dbReference type="PhosphoSitePlus" id="Q8R4Y0"/>
<dbReference type="PaxDb" id="10090-ENSMUSP00000130936"/>
<dbReference type="ProteomicsDB" id="272978">
    <molecule id="Q8R4Y0-1"/>
</dbReference>
<dbReference type="ProteomicsDB" id="272979">
    <molecule id="Q8R4Y0-2"/>
</dbReference>
<dbReference type="ProteomicsDB" id="272980">
    <molecule id="Q8R4Y0-3"/>
</dbReference>
<dbReference type="ProteomicsDB" id="272981">
    <molecule id="Q8R4Y0-4"/>
</dbReference>
<dbReference type="ABCD" id="Q8R4Y0">
    <property type="antibodies" value="34 sequenced antibodies"/>
</dbReference>
<dbReference type="DNASU" id="229499"/>
<dbReference type="GeneID" id="229499"/>
<dbReference type="KEGG" id="mmu:229499"/>
<dbReference type="AGR" id="MGI:2442862"/>
<dbReference type="CTD" id="115350"/>
<dbReference type="MGI" id="MGI:2442862">
    <property type="gene designation" value="Fcrl1"/>
</dbReference>
<dbReference type="eggNOG" id="ENOG502S65W">
    <property type="taxonomic scope" value="Eukaryota"/>
</dbReference>
<dbReference type="InParanoid" id="Q8R4Y0"/>
<dbReference type="OrthoDB" id="10039395at2759"/>
<dbReference type="PhylomeDB" id="Q8R4Y0"/>
<dbReference type="BioGRID-ORCS" id="229499">
    <property type="hits" value="3 hits in 77 CRISPR screens"/>
</dbReference>
<dbReference type="ChiTaRS" id="Fcrla">
    <property type="organism name" value="mouse"/>
</dbReference>
<dbReference type="PRO" id="PR:Q8R4Y0"/>
<dbReference type="Proteomes" id="UP000000589">
    <property type="component" value="Unplaced"/>
</dbReference>
<dbReference type="RNAct" id="Q8R4Y0">
    <property type="molecule type" value="protein"/>
</dbReference>
<dbReference type="GO" id="GO:0005886">
    <property type="term" value="C:plasma membrane"/>
    <property type="evidence" value="ECO:0007669"/>
    <property type="project" value="UniProtKB-SubCell"/>
</dbReference>
<dbReference type="CDD" id="cd00096">
    <property type="entry name" value="Ig"/>
    <property type="match status" value="1"/>
</dbReference>
<dbReference type="FunFam" id="2.60.40.10:FF:000357">
    <property type="entry name" value="Fc receptor like 1"/>
    <property type="match status" value="1"/>
</dbReference>
<dbReference type="FunFam" id="2.60.40.10:FF:000592">
    <property type="entry name" value="Fc receptor like 1"/>
    <property type="match status" value="1"/>
</dbReference>
<dbReference type="Gene3D" id="2.60.40.10">
    <property type="entry name" value="Immunoglobulins"/>
    <property type="match status" value="2"/>
</dbReference>
<dbReference type="InterPro" id="IPR007110">
    <property type="entry name" value="Ig-like_dom"/>
</dbReference>
<dbReference type="InterPro" id="IPR036179">
    <property type="entry name" value="Ig-like_dom_sf"/>
</dbReference>
<dbReference type="InterPro" id="IPR013783">
    <property type="entry name" value="Ig-like_fold"/>
</dbReference>
<dbReference type="InterPro" id="IPR003599">
    <property type="entry name" value="Ig_sub"/>
</dbReference>
<dbReference type="InterPro" id="IPR013151">
    <property type="entry name" value="Immunoglobulin_dom"/>
</dbReference>
<dbReference type="PANTHER" id="PTHR46013:SF4">
    <property type="entry name" value="B-CELL RECEPTOR CD22-RELATED"/>
    <property type="match status" value="1"/>
</dbReference>
<dbReference type="PANTHER" id="PTHR46013">
    <property type="entry name" value="VASCULAR CELL ADHESION MOLECULE 1"/>
    <property type="match status" value="1"/>
</dbReference>
<dbReference type="Pfam" id="PF00047">
    <property type="entry name" value="ig"/>
    <property type="match status" value="1"/>
</dbReference>
<dbReference type="Pfam" id="PF13927">
    <property type="entry name" value="Ig_3"/>
    <property type="match status" value="1"/>
</dbReference>
<dbReference type="SMART" id="SM00409">
    <property type="entry name" value="IG"/>
    <property type="match status" value="2"/>
</dbReference>
<dbReference type="SUPFAM" id="SSF48726">
    <property type="entry name" value="Immunoglobulin"/>
    <property type="match status" value="2"/>
</dbReference>
<dbReference type="PROSITE" id="PS50835">
    <property type="entry name" value="IG_LIKE"/>
    <property type="match status" value="2"/>
</dbReference>
<organism>
    <name type="scientific">Mus musculus</name>
    <name type="common">Mouse</name>
    <dbReference type="NCBI Taxonomy" id="10090"/>
    <lineage>
        <taxon>Eukaryota</taxon>
        <taxon>Metazoa</taxon>
        <taxon>Chordata</taxon>
        <taxon>Craniata</taxon>
        <taxon>Vertebrata</taxon>
        <taxon>Euteleostomi</taxon>
        <taxon>Mammalia</taxon>
        <taxon>Eutheria</taxon>
        <taxon>Euarchontoglires</taxon>
        <taxon>Glires</taxon>
        <taxon>Rodentia</taxon>
        <taxon>Myomorpha</taxon>
        <taxon>Muroidea</taxon>
        <taxon>Muridae</taxon>
        <taxon>Murinae</taxon>
        <taxon>Mus</taxon>
        <taxon>Mus</taxon>
    </lineage>
</organism>
<gene>
    <name type="primary">Fcrl1</name>
    <name type="synonym">Fcrh1</name>
    <name type="synonym">Ifgp1</name>
</gene>
<keyword id="KW-0025">Alternative splicing</keyword>
<keyword id="KW-1003">Cell membrane</keyword>
<keyword id="KW-1015">Disulfide bond</keyword>
<keyword id="KW-0325">Glycoprotein</keyword>
<keyword id="KW-0393">Immunoglobulin domain</keyword>
<keyword id="KW-0472">Membrane</keyword>
<keyword id="KW-0597">Phosphoprotein</keyword>
<keyword id="KW-0675">Receptor</keyword>
<keyword id="KW-1185">Reference proteome</keyword>
<keyword id="KW-0677">Repeat</keyword>
<keyword id="KW-0732">Signal</keyword>
<keyword id="KW-0812">Transmembrane</keyword>
<keyword id="KW-1133">Transmembrane helix</keyword>